<proteinExistence type="evidence at protein level"/>
<feature type="transit peptide" description="Chloroplast" evidence="2">
    <location>
        <begin position="1"/>
        <end position="75"/>
    </location>
</feature>
<feature type="chain" id="PRO_0000429026" description="FAD synthetase 1, chloroplastic">
    <location>
        <begin position="76"/>
        <end position="354"/>
    </location>
</feature>
<feature type="region of interest" description="Disordered" evidence="3">
    <location>
        <begin position="228"/>
        <end position="248"/>
    </location>
</feature>
<feature type="sequence conflict" description="In Ref. 4; AAM62808." evidence="6" ref="4">
    <original>N</original>
    <variation>S</variation>
    <location>
        <position position="151"/>
    </location>
</feature>
<feature type="sequence conflict" description="In Ref. 4; AAM62808." evidence="6" ref="4">
    <original>L</original>
    <variation>I</variation>
    <location>
        <position position="280"/>
    </location>
</feature>
<accession>Q9FMW8</accession>
<accession>Q8LE72</accession>
<protein>
    <recommendedName>
        <fullName evidence="5">FAD synthetase 1, chloroplastic</fullName>
        <ecNumber evidence="4">2.7.7.2</ecNumber>
    </recommendedName>
    <alternativeName>
        <fullName evidence="5">AtRibF1</fullName>
    </alternativeName>
    <alternativeName>
        <fullName evidence="5">FAD pyrophosphorylase 1</fullName>
    </alternativeName>
    <alternativeName>
        <fullName evidence="5">FMN adenylyltransferase 1</fullName>
    </alternativeName>
    <alternativeName>
        <fullName evidence="5">Flavin adenine dinucleotide synthase 1</fullName>
    </alternativeName>
</protein>
<evidence type="ECO:0000250" key="1">
    <source>
        <dbReference type="UniProtKB" id="Q969G6"/>
    </source>
</evidence>
<evidence type="ECO:0000255" key="2"/>
<evidence type="ECO:0000256" key="3">
    <source>
        <dbReference type="SAM" id="MobiDB-lite"/>
    </source>
</evidence>
<evidence type="ECO:0000269" key="4">
    <source>
    </source>
</evidence>
<evidence type="ECO:0000303" key="5">
    <source>
    </source>
</evidence>
<evidence type="ECO:0000305" key="6"/>
<evidence type="ECO:0000312" key="7">
    <source>
        <dbReference type="Araport" id="AT5G23330"/>
    </source>
</evidence>
<evidence type="ECO:0000312" key="8">
    <source>
        <dbReference type="EMBL" id="BAB11188.1"/>
    </source>
</evidence>
<organism>
    <name type="scientific">Arabidopsis thaliana</name>
    <name type="common">Mouse-ear cress</name>
    <dbReference type="NCBI Taxonomy" id="3702"/>
    <lineage>
        <taxon>Eukaryota</taxon>
        <taxon>Viridiplantae</taxon>
        <taxon>Streptophyta</taxon>
        <taxon>Embryophyta</taxon>
        <taxon>Tracheophyta</taxon>
        <taxon>Spermatophyta</taxon>
        <taxon>Magnoliopsida</taxon>
        <taxon>eudicotyledons</taxon>
        <taxon>Gunneridae</taxon>
        <taxon>Pentapetalae</taxon>
        <taxon>rosids</taxon>
        <taxon>malvids</taxon>
        <taxon>Brassicales</taxon>
        <taxon>Brassicaceae</taxon>
        <taxon>Camelineae</taxon>
        <taxon>Arabidopsis</taxon>
    </lineage>
</organism>
<gene>
    <name evidence="5" type="primary">RIBF1</name>
    <name evidence="7" type="ordered locus">At5g23330</name>
    <name evidence="8" type="ORF">MKD15.19</name>
</gene>
<dbReference type="EC" id="2.7.7.2" evidence="4"/>
<dbReference type="EMBL" id="EU687457">
    <property type="protein sequence ID" value="ACH56223.1"/>
    <property type="molecule type" value="mRNA"/>
</dbReference>
<dbReference type="EMBL" id="AB007648">
    <property type="protein sequence ID" value="BAB11188.1"/>
    <property type="molecule type" value="Genomic_DNA"/>
</dbReference>
<dbReference type="EMBL" id="CP002688">
    <property type="protein sequence ID" value="AED93152.1"/>
    <property type="molecule type" value="Genomic_DNA"/>
</dbReference>
<dbReference type="EMBL" id="AY085587">
    <property type="protein sequence ID" value="AAM62808.1"/>
    <property type="molecule type" value="mRNA"/>
</dbReference>
<dbReference type="RefSeq" id="NP_568429.1">
    <property type="nucleotide sequence ID" value="NM_122239.3"/>
</dbReference>
<dbReference type="SMR" id="Q9FMW8"/>
<dbReference type="FunCoup" id="Q9FMW8">
    <property type="interactions" value="307"/>
</dbReference>
<dbReference type="STRING" id="3702.Q9FMW8"/>
<dbReference type="PaxDb" id="3702-AT5G23330.1"/>
<dbReference type="ProteomicsDB" id="236186"/>
<dbReference type="EnsemblPlants" id="AT5G23330.1">
    <property type="protein sequence ID" value="AT5G23330.1"/>
    <property type="gene ID" value="AT5G23330"/>
</dbReference>
<dbReference type="GeneID" id="832397"/>
<dbReference type="Gramene" id="AT5G23330.1">
    <property type="protein sequence ID" value="AT5G23330.1"/>
    <property type="gene ID" value="AT5G23330"/>
</dbReference>
<dbReference type="KEGG" id="ath:AT5G23330"/>
<dbReference type="Araport" id="AT5G23330"/>
<dbReference type="TAIR" id="AT5G23330"/>
<dbReference type="eggNOG" id="ENOG502QVVU">
    <property type="taxonomic scope" value="Eukaryota"/>
</dbReference>
<dbReference type="HOGENOM" id="CLU_057424_1_0_1"/>
<dbReference type="InParanoid" id="Q9FMW8"/>
<dbReference type="OMA" id="SHHFRDC"/>
<dbReference type="PhylomeDB" id="Q9FMW8"/>
<dbReference type="BRENDA" id="2.7.7.2">
    <property type="organism ID" value="399"/>
</dbReference>
<dbReference type="UniPathway" id="UPA00277">
    <property type="reaction ID" value="UER00407"/>
</dbReference>
<dbReference type="PRO" id="PR:Q9FMW8"/>
<dbReference type="Proteomes" id="UP000006548">
    <property type="component" value="Chromosome 5"/>
</dbReference>
<dbReference type="ExpressionAtlas" id="Q9FMW8">
    <property type="expression patterns" value="baseline and differential"/>
</dbReference>
<dbReference type="GO" id="GO:0009507">
    <property type="term" value="C:chloroplast"/>
    <property type="evidence" value="ECO:0000314"/>
    <property type="project" value="UniProtKB"/>
</dbReference>
<dbReference type="GO" id="GO:0005524">
    <property type="term" value="F:ATP binding"/>
    <property type="evidence" value="ECO:0007669"/>
    <property type="project" value="UniProtKB-KW"/>
</dbReference>
<dbReference type="GO" id="GO:0003919">
    <property type="term" value="F:FMN adenylyltransferase activity"/>
    <property type="evidence" value="ECO:0000314"/>
    <property type="project" value="UniProtKB"/>
</dbReference>
<dbReference type="GO" id="GO:0006747">
    <property type="term" value="P:FAD biosynthetic process"/>
    <property type="evidence" value="ECO:0000314"/>
    <property type="project" value="UniProtKB"/>
</dbReference>
<dbReference type="GO" id="GO:0009231">
    <property type="term" value="P:riboflavin biosynthetic process"/>
    <property type="evidence" value="ECO:0007669"/>
    <property type="project" value="InterPro"/>
</dbReference>
<dbReference type="CDD" id="cd02064">
    <property type="entry name" value="FAD_synthetase_N"/>
    <property type="match status" value="1"/>
</dbReference>
<dbReference type="FunFam" id="3.40.50.620:FF:000307">
    <property type="entry name" value="FAD synthetase 1, chloroplastic"/>
    <property type="match status" value="1"/>
</dbReference>
<dbReference type="Gene3D" id="3.40.50.620">
    <property type="entry name" value="HUPs"/>
    <property type="match status" value="1"/>
</dbReference>
<dbReference type="InterPro" id="IPR015864">
    <property type="entry name" value="FAD_synthase"/>
</dbReference>
<dbReference type="InterPro" id="IPR014729">
    <property type="entry name" value="Rossmann-like_a/b/a_fold"/>
</dbReference>
<dbReference type="PANTHER" id="PTHR12714:SF20">
    <property type="entry name" value="FAD SYNTHETASE 1, CHLOROPLASTIC-RELATED"/>
    <property type="match status" value="1"/>
</dbReference>
<dbReference type="PANTHER" id="PTHR12714">
    <property type="entry name" value="PROTEIN-S ISOPRENYLCYSTEINE O-METHYLTRANSFERASE"/>
    <property type="match status" value="1"/>
</dbReference>
<dbReference type="Pfam" id="PF06574">
    <property type="entry name" value="FAD_syn"/>
    <property type="match status" value="1"/>
</dbReference>
<dbReference type="SUPFAM" id="SSF52374">
    <property type="entry name" value="Nucleotidylyl transferase"/>
    <property type="match status" value="1"/>
</dbReference>
<keyword id="KW-0067">ATP-binding</keyword>
<keyword id="KW-0150">Chloroplast</keyword>
<keyword id="KW-0274">FAD</keyword>
<keyword id="KW-0285">Flavoprotein</keyword>
<keyword id="KW-0288">FMN</keyword>
<keyword id="KW-0547">Nucleotide-binding</keyword>
<keyword id="KW-0548">Nucleotidyltransferase</keyword>
<keyword id="KW-0934">Plastid</keyword>
<keyword id="KW-1185">Reference proteome</keyword>
<keyword id="KW-0808">Transferase</keyword>
<keyword id="KW-0809">Transit peptide</keyword>
<comment type="function">
    <text evidence="4">Catalyzes the adenylation of flavin mononucleotide (FMN) to form flavin adenine dinucleotide (FAD) coenzyme.</text>
</comment>
<comment type="catalytic activity">
    <reaction evidence="4">
        <text>FMN + ATP + H(+) = FAD + diphosphate</text>
        <dbReference type="Rhea" id="RHEA:17237"/>
        <dbReference type="ChEBI" id="CHEBI:15378"/>
        <dbReference type="ChEBI" id="CHEBI:30616"/>
        <dbReference type="ChEBI" id="CHEBI:33019"/>
        <dbReference type="ChEBI" id="CHEBI:57692"/>
        <dbReference type="ChEBI" id="CHEBI:58210"/>
        <dbReference type="EC" id="2.7.7.2"/>
    </reaction>
</comment>
<comment type="cofactor">
    <cofactor evidence="1">
        <name>Mg(2+)</name>
        <dbReference type="ChEBI" id="CHEBI:18420"/>
    </cofactor>
</comment>
<comment type="biophysicochemical properties">
    <kinetics>
        <KM evidence="4">18.9 uM for FMN</KM>
        <KM evidence="4">11.1 uM for ATP</KM>
        <text evidence="4">kcat is 1.08x10(-1) sec(-1) with FMN as substrate (PubMed:18713732). kcat is 1.07x10(-1) sec(-1) with ATP as substrate (PubMed:18713732).</text>
    </kinetics>
</comment>
<comment type="pathway">
    <text evidence="4">Cofactor biosynthesis; FAD biosynthesis; FAD from FMN: step 1/1.</text>
</comment>
<comment type="subcellular location">
    <subcellularLocation>
        <location evidence="4">Plastid</location>
        <location evidence="4">Chloroplast</location>
    </subcellularLocation>
</comment>
<sequence>MLCGGSRASVHLWDHRHPPRLGAKVLRKSSFMLRPCSAISQQRIKSSFRSHCKTPRKIPAPLDCFSQGDDHPELSAEGLSPVAGGIVALGKFDALHIGHRELAIQAARIGTPYLLSFVGLAEVLGWKPRAPIVAKCDRKRVLSSWASYCGNIAPVEFEIEFASVRHLNPQQFVEKLSRELRVCGVVAGENYRFGYRASGDASELVRLCKDFGISAYIINSVMDKNQVSVNTEEEDSKSKERGQVSSTRVRHALAAGDVRYVTELLGRPHRVISRTRTQDLTSKRGRISLQTSSLLNLPPGNGVYKACSLIVGDKHPISCKVIVDTSNLYIETEEERFHNSDESQEFQLLGIEFG</sequence>
<name>RIBF1_ARATH</name>
<reference key="1">
    <citation type="journal article" date="2008" name="J. Biol. Chem.">
        <title>Flavin nucleotide metabolism in plants: monofunctional enzymes synthesize fad in plastids.</title>
        <authorList>
            <person name="Sandoval F.J."/>
            <person name="Zhang Y."/>
            <person name="Roje S."/>
        </authorList>
    </citation>
    <scope>NUCLEOTIDE SEQUENCE [MRNA]</scope>
    <scope>FUNCTION</scope>
    <scope>CATALYTIC ACTIVITY</scope>
    <scope>BIOPHYSICOCHEMICAL PROPERTIES</scope>
    <scope>PATHWAY</scope>
    <scope>SUBCELLULAR LOCATION</scope>
    <source>
        <strain>cv. Columbia</strain>
    </source>
</reference>
<reference key="2">
    <citation type="journal article" date="1997" name="DNA Res.">
        <title>Structural analysis of Arabidopsis thaliana chromosome 5. III. Sequence features of the regions of 1,191,918 bp covered by seventeen physically assigned P1 clones.</title>
        <authorList>
            <person name="Nakamura Y."/>
            <person name="Sato S."/>
            <person name="Kaneko T."/>
            <person name="Kotani H."/>
            <person name="Asamizu E."/>
            <person name="Miyajima N."/>
            <person name="Tabata S."/>
        </authorList>
    </citation>
    <scope>NUCLEOTIDE SEQUENCE [LARGE SCALE GENOMIC DNA]</scope>
    <source>
        <strain>cv. Columbia</strain>
    </source>
</reference>
<reference key="3">
    <citation type="journal article" date="2017" name="Plant J.">
        <title>Araport11: a complete reannotation of the Arabidopsis thaliana reference genome.</title>
        <authorList>
            <person name="Cheng C.Y."/>
            <person name="Krishnakumar V."/>
            <person name="Chan A.P."/>
            <person name="Thibaud-Nissen F."/>
            <person name="Schobel S."/>
            <person name="Town C.D."/>
        </authorList>
    </citation>
    <scope>GENOME REANNOTATION</scope>
    <source>
        <strain>cv. Columbia</strain>
    </source>
</reference>
<reference key="4">
    <citation type="submission" date="2002-03" db="EMBL/GenBank/DDBJ databases">
        <title>Full-length cDNA from Arabidopsis thaliana.</title>
        <authorList>
            <person name="Brover V.V."/>
            <person name="Troukhan M.E."/>
            <person name="Alexandrov N.A."/>
            <person name="Lu Y.-P."/>
            <person name="Flavell R.B."/>
            <person name="Feldmann K.A."/>
        </authorList>
    </citation>
    <scope>NUCLEOTIDE SEQUENCE [LARGE SCALE MRNA]</scope>
</reference>